<comment type="similarity">
    <text evidence="1">Belongs to the bacterial ribosomal protein bL32 family.</text>
</comment>
<dbReference type="EMBL" id="CP000083">
    <property type="protein sequence ID" value="AAZ27947.1"/>
    <property type="molecule type" value="Genomic_DNA"/>
</dbReference>
<dbReference type="RefSeq" id="WP_011043108.1">
    <property type="nucleotide sequence ID" value="NC_003910.7"/>
</dbReference>
<dbReference type="SMR" id="Q482K3"/>
<dbReference type="STRING" id="167879.CPS_2294"/>
<dbReference type="KEGG" id="cps:CPS_2294"/>
<dbReference type="eggNOG" id="COG0333">
    <property type="taxonomic scope" value="Bacteria"/>
</dbReference>
<dbReference type="HOGENOM" id="CLU_129084_2_1_6"/>
<dbReference type="Proteomes" id="UP000000547">
    <property type="component" value="Chromosome"/>
</dbReference>
<dbReference type="GO" id="GO:0015934">
    <property type="term" value="C:large ribosomal subunit"/>
    <property type="evidence" value="ECO:0007669"/>
    <property type="project" value="InterPro"/>
</dbReference>
<dbReference type="GO" id="GO:0003735">
    <property type="term" value="F:structural constituent of ribosome"/>
    <property type="evidence" value="ECO:0007669"/>
    <property type="project" value="InterPro"/>
</dbReference>
<dbReference type="GO" id="GO:0006412">
    <property type="term" value="P:translation"/>
    <property type="evidence" value="ECO:0007669"/>
    <property type="project" value="UniProtKB-UniRule"/>
</dbReference>
<dbReference type="HAMAP" id="MF_00340">
    <property type="entry name" value="Ribosomal_bL32"/>
    <property type="match status" value="1"/>
</dbReference>
<dbReference type="InterPro" id="IPR002677">
    <property type="entry name" value="Ribosomal_bL32"/>
</dbReference>
<dbReference type="InterPro" id="IPR044957">
    <property type="entry name" value="Ribosomal_bL32_bact"/>
</dbReference>
<dbReference type="InterPro" id="IPR011332">
    <property type="entry name" value="Ribosomal_zn-bd"/>
</dbReference>
<dbReference type="NCBIfam" id="TIGR01031">
    <property type="entry name" value="rpmF_bact"/>
    <property type="match status" value="1"/>
</dbReference>
<dbReference type="PANTHER" id="PTHR35534">
    <property type="entry name" value="50S RIBOSOMAL PROTEIN L32"/>
    <property type="match status" value="1"/>
</dbReference>
<dbReference type="PANTHER" id="PTHR35534:SF1">
    <property type="entry name" value="LARGE RIBOSOMAL SUBUNIT PROTEIN BL32"/>
    <property type="match status" value="1"/>
</dbReference>
<dbReference type="Pfam" id="PF01783">
    <property type="entry name" value="Ribosomal_L32p"/>
    <property type="match status" value="1"/>
</dbReference>
<dbReference type="SUPFAM" id="SSF57829">
    <property type="entry name" value="Zn-binding ribosomal proteins"/>
    <property type="match status" value="1"/>
</dbReference>
<proteinExistence type="inferred from homology"/>
<evidence type="ECO:0000255" key="1">
    <source>
        <dbReference type="HAMAP-Rule" id="MF_00340"/>
    </source>
</evidence>
<evidence type="ECO:0000256" key="2">
    <source>
        <dbReference type="SAM" id="MobiDB-lite"/>
    </source>
</evidence>
<evidence type="ECO:0000305" key="3"/>
<feature type="chain" id="PRO_0000225717" description="Large ribosomal subunit protein bL32">
    <location>
        <begin position="1"/>
        <end position="56"/>
    </location>
</feature>
<feature type="region of interest" description="Disordered" evidence="2">
    <location>
        <begin position="1"/>
        <end position="38"/>
    </location>
</feature>
<feature type="compositionally biased region" description="Basic residues" evidence="2">
    <location>
        <begin position="1"/>
        <end position="16"/>
    </location>
</feature>
<gene>
    <name evidence="1" type="primary">rpmF</name>
    <name type="ordered locus">CPS_2294</name>
</gene>
<organism>
    <name type="scientific">Colwellia psychrerythraea (strain 34H / ATCC BAA-681)</name>
    <name type="common">Vibrio psychroerythus</name>
    <dbReference type="NCBI Taxonomy" id="167879"/>
    <lineage>
        <taxon>Bacteria</taxon>
        <taxon>Pseudomonadati</taxon>
        <taxon>Pseudomonadota</taxon>
        <taxon>Gammaproteobacteria</taxon>
        <taxon>Alteromonadales</taxon>
        <taxon>Colwelliaceae</taxon>
        <taxon>Colwellia</taxon>
    </lineage>
</organism>
<keyword id="KW-0687">Ribonucleoprotein</keyword>
<keyword id="KW-0689">Ribosomal protein</keyword>
<sequence length="56" mass="6285">MAVQKSKKSRSRRGMRRSHDAVTPENLSVDPVSGETHRRHHITADGFYKGVKVIAV</sequence>
<reference key="1">
    <citation type="journal article" date="2005" name="Proc. Natl. Acad. Sci. U.S.A.">
        <title>The psychrophilic lifestyle as revealed by the genome sequence of Colwellia psychrerythraea 34H through genomic and proteomic analyses.</title>
        <authorList>
            <person name="Methe B.A."/>
            <person name="Nelson K.E."/>
            <person name="Deming J.W."/>
            <person name="Momen B."/>
            <person name="Melamud E."/>
            <person name="Zhang X."/>
            <person name="Moult J."/>
            <person name="Madupu R."/>
            <person name="Nelson W.C."/>
            <person name="Dodson R.J."/>
            <person name="Brinkac L.M."/>
            <person name="Daugherty S.C."/>
            <person name="Durkin A.S."/>
            <person name="DeBoy R.T."/>
            <person name="Kolonay J.F."/>
            <person name="Sullivan S.A."/>
            <person name="Zhou L."/>
            <person name="Davidsen T.M."/>
            <person name="Wu M."/>
            <person name="Huston A.L."/>
            <person name="Lewis M."/>
            <person name="Weaver B."/>
            <person name="Weidman J.F."/>
            <person name="Khouri H."/>
            <person name="Utterback T.R."/>
            <person name="Feldblyum T.V."/>
            <person name="Fraser C.M."/>
        </authorList>
    </citation>
    <scope>NUCLEOTIDE SEQUENCE [LARGE SCALE GENOMIC DNA]</scope>
    <source>
        <strain>34H / ATCC BAA-681</strain>
    </source>
</reference>
<protein>
    <recommendedName>
        <fullName evidence="1">Large ribosomal subunit protein bL32</fullName>
    </recommendedName>
    <alternativeName>
        <fullName evidence="3">50S ribosomal protein L32</fullName>
    </alternativeName>
</protein>
<name>RL32_COLP3</name>
<accession>Q482K3</accession>